<organism>
    <name type="scientific">Fervidobacterium nodosum (strain ATCC 35602 / DSM 5306 / Rt17-B1)</name>
    <dbReference type="NCBI Taxonomy" id="381764"/>
    <lineage>
        <taxon>Bacteria</taxon>
        <taxon>Thermotogati</taxon>
        <taxon>Thermotogota</taxon>
        <taxon>Thermotogae</taxon>
        <taxon>Thermotogales</taxon>
        <taxon>Fervidobacteriaceae</taxon>
        <taxon>Fervidobacterium</taxon>
    </lineage>
</organism>
<evidence type="ECO:0000255" key="1">
    <source>
        <dbReference type="HAMAP-Rule" id="MF_00713"/>
    </source>
</evidence>
<reference key="1">
    <citation type="submission" date="2007-07" db="EMBL/GenBank/DDBJ databases">
        <title>Complete sequence of Fervidobacterium nodosum Rt17-B1.</title>
        <authorList>
            <consortium name="US DOE Joint Genome Institute"/>
            <person name="Copeland A."/>
            <person name="Lucas S."/>
            <person name="Lapidus A."/>
            <person name="Barry K."/>
            <person name="Glavina del Rio T."/>
            <person name="Dalin E."/>
            <person name="Tice H."/>
            <person name="Pitluck S."/>
            <person name="Saunders E."/>
            <person name="Brettin T."/>
            <person name="Bruce D."/>
            <person name="Detter J.C."/>
            <person name="Han C."/>
            <person name="Schmutz J."/>
            <person name="Larimer F."/>
            <person name="Land M."/>
            <person name="Hauser L."/>
            <person name="Kyrpides N."/>
            <person name="Mikhailova N."/>
            <person name="Nelson K."/>
            <person name="Gogarten J.P."/>
            <person name="Noll K."/>
            <person name="Richardson P."/>
        </authorList>
    </citation>
    <scope>NUCLEOTIDE SEQUENCE [LARGE SCALE GENOMIC DNA]</scope>
    <source>
        <strain>ATCC 35602 / DSM 5306 / Rt17-B1</strain>
    </source>
</reference>
<proteinExistence type="inferred from homology"/>
<comment type="function">
    <text evidence="1">The glycine cleavage system catalyzes the degradation of glycine. The P protein binds the alpha-amino group of glycine through its pyridoxal phosphate cofactor; CO(2) is released and the remaining methylamine moiety is then transferred to the lipoamide cofactor of the H protein.</text>
</comment>
<comment type="catalytic activity">
    <reaction evidence="1">
        <text>N(6)-[(R)-lipoyl]-L-lysyl-[glycine-cleavage complex H protein] + glycine + H(+) = N(6)-[(R)-S(8)-aminomethyldihydrolipoyl]-L-lysyl-[glycine-cleavage complex H protein] + CO2</text>
        <dbReference type="Rhea" id="RHEA:24304"/>
        <dbReference type="Rhea" id="RHEA-COMP:10494"/>
        <dbReference type="Rhea" id="RHEA-COMP:10495"/>
        <dbReference type="ChEBI" id="CHEBI:15378"/>
        <dbReference type="ChEBI" id="CHEBI:16526"/>
        <dbReference type="ChEBI" id="CHEBI:57305"/>
        <dbReference type="ChEBI" id="CHEBI:83099"/>
        <dbReference type="ChEBI" id="CHEBI:83143"/>
        <dbReference type="EC" id="1.4.4.2"/>
    </reaction>
</comment>
<comment type="cofactor">
    <cofactor evidence="1">
        <name>pyridoxal 5'-phosphate</name>
        <dbReference type="ChEBI" id="CHEBI:597326"/>
    </cofactor>
</comment>
<comment type="subunit">
    <text evidence="1">The glycine cleavage system is composed of four proteins: P, T, L and H. In this organism, the P 'protein' is a heterodimer of two subunits.</text>
</comment>
<comment type="similarity">
    <text evidence="1">Belongs to the GcvP family. C-terminal subunit subfamily.</text>
</comment>
<sequence length="477" mass="53430">MTIFEKSTSGRKGYELPEYELPSVDCGIPEHLVRKEKPLLPEVSEVDVVRHYTELASKNYSVDKGFYPLGSCTMKYNPKINEDMAMLFTQLHPMQPRETIQGAIDLMGHLKEMLCEITGTDDMTLQPAAGAHGELTGLLVARAYFEDKGELDKRRKVLVPDSAHGTNPASAAMAGFEVVELKSGKDGCVNLEELKAHLDENVAVIMLTNPNTLGLFEKDILTIAKMAHEVGALLYYDGANLNAIMGRTRPGDMGFDIVHLNLHKTFSTPHGMGGPGSGPIGVKKHLAPYLPVPVIRKAGEKYDLDYNLPKSIGMVRSFYGNFTVMVKAYTYILTMGNKGLKHVSDMAVLNANYLRAKLSKIYKVAYDRICMHEFVIDNEEFVKKTGVKTLDIAKRLLDYGLHAPTVYFPLIVHEAMMIEPTETESKRTLDEFIDAMEKIYNEAIENPELVKKAPYKTPIRRLDDVNATKYPVFRYKK</sequence>
<keyword id="KW-0560">Oxidoreductase</keyword>
<keyword id="KW-0663">Pyridoxal phosphate</keyword>
<keyword id="KW-1185">Reference proteome</keyword>
<gene>
    <name evidence="1" type="primary">gcvPB</name>
    <name type="ordered locus">Fnod_0974</name>
</gene>
<dbReference type="EC" id="1.4.4.2" evidence="1"/>
<dbReference type="EMBL" id="CP000771">
    <property type="protein sequence ID" value="ABS60824.1"/>
    <property type="molecule type" value="Genomic_DNA"/>
</dbReference>
<dbReference type="RefSeq" id="WP_011994139.1">
    <property type="nucleotide sequence ID" value="NC_009718.1"/>
</dbReference>
<dbReference type="SMR" id="A7HLP1"/>
<dbReference type="STRING" id="381764.Fnod_0974"/>
<dbReference type="KEGG" id="fno:Fnod_0974"/>
<dbReference type="eggNOG" id="COG1003">
    <property type="taxonomic scope" value="Bacteria"/>
</dbReference>
<dbReference type="HOGENOM" id="CLU_004620_5_0_0"/>
<dbReference type="OrthoDB" id="9801272at2"/>
<dbReference type="Proteomes" id="UP000002415">
    <property type="component" value="Chromosome"/>
</dbReference>
<dbReference type="GO" id="GO:0005829">
    <property type="term" value="C:cytosol"/>
    <property type="evidence" value="ECO:0007669"/>
    <property type="project" value="TreeGrafter"/>
</dbReference>
<dbReference type="GO" id="GO:0005960">
    <property type="term" value="C:glycine cleavage complex"/>
    <property type="evidence" value="ECO:0007669"/>
    <property type="project" value="TreeGrafter"/>
</dbReference>
<dbReference type="GO" id="GO:0016594">
    <property type="term" value="F:glycine binding"/>
    <property type="evidence" value="ECO:0007669"/>
    <property type="project" value="TreeGrafter"/>
</dbReference>
<dbReference type="GO" id="GO:0004375">
    <property type="term" value="F:glycine dehydrogenase (decarboxylating) activity"/>
    <property type="evidence" value="ECO:0007669"/>
    <property type="project" value="UniProtKB-EC"/>
</dbReference>
<dbReference type="GO" id="GO:0030170">
    <property type="term" value="F:pyridoxal phosphate binding"/>
    <property type="evidence" value="ECO:0007669"/>
    <property type="project" value="TreeGrafter"/>
</dbReference>
<dbReference type="GO" id="GO:0019464">
    <property type="term" value="P:glycine decarboxylation via glycine cleavage system"/>
    <property type="evidence" value="ECO:0007669"/>
    <property type="project" value="UniProtKB-UniRule"/>
</dbReference>
<dbReference type="CDD" id="cd00613">
    <property type="entry name" value="GDC-P"/>
    <property type="match status" value="1"/>
</dbReference>
<dbReference type="FunFam" id="3.40.640.10:FF:000034">
    <property type="entry name" value="Probable glycine dehydrogenase (decarboxylating) subunit 2"/>
    <property type="match status" value="1"/>
</dbReference>
<dbReference type="FunFam" id="3.90.1150.10:FF:000014">
    <property type="entry name" value="Probable glycine dehydrogenase (decarboxylating) subunit 2"/>
    <property type="match status" value="1"/>
</dbReference>
<dbReference type="Gene3D" id="6.20.440.10">
    <property type="match status" value="1"/>
</dbReference>
<dbReference type="Gene3D" id="3.90.1150.10">
    <property type="entry name" value="Aspartate Aminotransferase, domain 1"/>
    <property type="match status" value="1"/>
</dbReference>
<dbReference type="Gene3D" id="3.40.640.10">
    <property type="entry name" value="Type I PLP-dependent aspartate aminotransferase-like (Major domain)"/>
    <property type="match status" value="1"/>
</dbReference>
<dbReference type="HAMAP" id="MF_00713">
    <property type="entry name" value="GcvPB"/>
    <property type="match status" value="1"/>
</dbReference>
<dbReference type="InterPro" id="IPR023012">
    <property type="entry name" value="GcvPB"/>
</dbReference>
<dbReference type="InterPro" id="IPR049316">
    <property type="entry name" value="GDC-P_C"/>
</dbReference>
<dbReference type="InterPro" id="IPR049315">
    <property type="entry name" value="GDC-P_N"/>
</dbReference>
<dbReference type="InterPro" id="IPR020581">
    <property type="entry name" value="GDC_P"/>
</dbReference>
<dbReference type="InterPro" id="IPR015424">
    <property type="entry name" value="PyrdxlP-dep_Trfase"/>
</dbReference>
<dbReference type="InterPro" id="IPR015421">
    <property type="entry name" value="PyrdxlP-dep_Trfase_major"/>
</dbReference>
<dbReference type="InterPro" id="IPR015422">
    <property type="entry name" value="PyrdxlP-dep_Trfase_small"/>
</dbReference>
<dbReference type="NCBIfam" id="NF003346">
    <property type="entry name" value="PRK04366.1"/>
    <property type="match status" value="1"/>
</dbReference>
<dbReference type="PANTHER" id="PTHR11773:SF1">
    <property type="entry name" value="GLYCINE DEHYDROGENASE (DECARBOXYLATING), MITOCHONDRIAL"/>
    <property type="match status" value="1"/>
</dbReference>
<dbReference type="PANTHER" id="PTHR11773">
    <property type="entry name" value="GLYCINE DEHYDROGENASE, DECARBOXYLATING"/>
    <property type="match status" value="1"/>
</dbReference>
<dbReference type="Pfam" id="PF21478">
    <property type="entry name" value="GcvP2_C"/>
    <property type="match status" value="1"/>
</dbReference>
<dbReference type="Pfam" id="PF02347">
    <property type="entry name" value="GDC-P"/>
    <property type="match status" value="1"/>
</dbReference>
<dbReference type="SUPFAM" id="SSF53383">
    <property type="entry name" value="PLP-dependent transferases"/>
    <property type="match status" value="1"/>
</dbReference>
<accession>A7HLP1</accession>
<name>GCSPB_FERNB</name>
<feature type="chain" id="PRO_1000072772" description="Probable glycine dehydrogenase (decarboxylating) subunit 2">
    <location>
        <begin position="1"/>
        <end position="477"/>
    </location>
</feature>
<feature type="modified residue" description="N6-(pyridoxal phosphate)lysine" evidence="1">
    <location>
        <position position="264"/>
    </location>
</feature>
<protein>
    <recommendedName>
        <fullName evidence="1">Probable glycine dehydrogenase (decarboxylating) subunit 2</fullName>
        <ecNumber evidence="1">1.4.4.2</ecNumber>
    </recommendedName>
    <alternativeName>
        <fullName evidence="1">Glycine cleavage system P-protein subunit 2</fullName>
    </alternativeName>
    <alternativeName>
        <fullName evidence="1">Glycine decarboxylase subunit 2</fullName>
    </alternativeName>
    <alternativeName>
        <fullName evidence="1">Glycine dehydrogenase (aminomethyl-transferring) subunit 2</fullName>
    </alternativeName>
</protein>